<keyword id="KW-0413">Isomerase</keyword>
<keyword id="KW-0663">Pyridoxal phosphate</keyword>
<keyword id="KW-1185">Reference proteome</keyword>
<gene>
    <name type="primary">alr</name>
    <name type="synonym">alaR</name>
    <name type="ordered locus">spr1540</name>
</gene>
<dbReference type="EC" id="5.1.1.1" evidence="1"/>
<dbReference type="EMBL" id="AE007317">
    <property type="protein sequence ID" value="AAL00344.1"/>
    <property type="status" value="ALT_INIT"/>
    <property type="molecule type" value="Genomic_DNA"/>
</dbReference>
<dbReference type="PIR" id="C98064">
    <property type="entry name" value="C98064"/>
</dbReference>
<dbReference type="RefSeq" id="NP_359133.1">
    <property type="nucleotide sequence ID" value="NC_003098.1"/>
</dbReference>
<dbReference type="RefSeq" id="WP_000648075.1">
    <property type="nucleotide sequence ID" value="NC_003098.1"/>
</dbReference>
<dbReference type="SMR" id="P0A2W9"/>
<dbReference type="STRING" id="171101.spr1540"/>
<dbReference type="KEGG" id="spr:spr1540"/>
<dbReference type="PATRIC" id="fig|171101.6.peg.1663"/>
<dbReference type="eggNOG" id="COG0787">
    <property type="taxonomic scope" value="Bacteria"/>
</dbReference>
<dbReference type="HOGENOM" id="CLU_028393_2_1_9"/>
<dbReference type="UniPathway" id="UPA00042">
    <property type="reaction ID" value="UER00497"/>
</dbReference>
<dbReference type="Proteomes" id="UP000000586">
    <property type="component" value="Chromosome"/>
</dbReference>
<dbReference type="GO" id="GO:0005829">
    <property type="term" value="C:cytosol"/>
    <property type="evidence" value="ECO:0000318"/>
    <property type="project" value="GO_Central"/>
</dbReference>
<dbReference type="GO" id="GO:0008784">
    <property type="term" value="F:alanine racemase activity"/>
    <property type="evidence" value="ECO:0000318"/>
    <property type="project" value="GO_Central"/>
</dbReference>
<dbReference type="GO" id="GO:0030170">
    <property type="term" value="F:pyridoxal phosphate binding"/>
    <property type="evidence" value="ECO:0000318"/>
    <property type="project" value="GO_Central"/>
</dbReference>
<dbReference type="GO" id="GO:0030632">
    <property type="term" value="P:D-alanine biosynthetic process"/>
    <property type="evidence" value="ECO:0000318"/>
    <property type="project" value="GO_Central"/>
</dbReference>
<dbReference type="GO" id="GO:0009252">
    <property type="term" value="P:peptidoglycan biosynthetic process"/>
    <property type="evidence" value="ECO:0000318"/>
    <property type="project" value="GO_Central"/>
</dbReference>
<dbReference type="CDD" id="cd00430">
    <property type="entry name" value="PLPDE_III_AR"/>
    <property type="match status" value="1"/>
</dbReference>
<dbReference type="FunFam" id="2.40.37.10:FF:000006">
    <property type="entry name" value="Alanine racemase"/>
    <property type="match status" value="1"/>
</dbReference>
<dbReference type="FunFam" id="3.20.20.10:FF:000002">
    <property type="entry name" value="Alanine racemase"/>
    <property type="match status" value="1"/>
</dbReference>
<dbReference type="Gene3D" id="3.20.20.10">
    <property type="entry name" value="Alanine racemase"/>
    <property type="match status" value="1"/>
</dbReference>
<dbReference type="Gene3D" id="2.40.37.10">
    <property type="entry name" value="Lyase, Ornithine Decarboxylase, Chain A, domain 1"/>
    <property type="match status" value="1"/>
</dbReference>
<dbReference type="HAMAP" id="MF_01201">
    <property type="entry name" value="Ala_racemase"/>
    <property type="match status" value="1"/>
</dbReference>
<dbReference type="InterPro" id="IPR000821">
    <property type="entry name" value="Ala_racemase"/>
</dbReference>
<dbReference type="InterPro" id="IPR009006">
    <property type="entry name" value="Ala_racemase/Decarboxylase_C"/>
</dbReference>
<dbReference type="InterPro" id="IPR011079">
    <property type="entry name" value="Ala_racemase_C"/>
</dbReference>
<dbReference type="InterPro" id="IPR001608">
    <property type="entry name" value="Ala_racemase_N"/>
</dbReference>
<dbReference type="InterPro" id="IPR020622">
    <property type="entry name" value="Ala_racemase_pyridoxalP-BS"/>
</dbReference>
<dbReference type="InterPro" id="IPR029066">
    <property type="entry name" value="PLP-binding_barrel"/>
</dbReference>
<dbReference type="NCBIfam" id="TIGR00492">
    <property type="entry name" value="alr"/>
    <property type="match status" value="1"/>
</dbReference>
<dbReference type="PANTHER" id="PTHR30511">
    <property type="entry name" value="ALANINE RACEMASE"/>
    <property type="match status" value="1"/>
</dbReference>
<dbReference type="PANTHER" id="PTHR30511:SF0">
    <property type="entry name" value="ALANINE RACEMASE, CATABOLIC-RELATED"/>
    <property type="match status" value="1"/>
</dbReference>
<dbReference type="Pfam" id="PF00842">
    <property type="entry name" value="Ala_racemase_C"/>
    <property type="match status" value="1"/>
</dbReference>
<dbReference type="Pfam" id="PF01168">
    <property type="entry name" value="Ala_racemase_N"/>
    <property type="match status" value="1"/>
</dbReference>
<dbReference type="PRINTS" id="PR00992">
    <property type="entry name" value="ALARACEMASE"/>
</dbReference>
<dbReference type="SMART" id="SM01005">
    <property type="entry name" value="Ala_racemase_C"/>
    <property type="match status" value="1"/>
</dbReference>
<dbReference type="SUPFAM" id="SSF50621">
    <property type="entry name" value="Alanine racemase C-terminal domain-like"/>
    <property type="match status" value="1"/>
</dbReference>
<dbReference type="SUPFAM" id="SSF51419">
    <property type="entry name" value="PLP-binding barrel"/>
    <property type="match status" value="1"/>
</dbReference>
<dbReference type="PROSITE" id="PS00395">
    <property type="entry name" value="ALANINE_RACEMASE"/>
    <property type="match status" value="1"/>
</dbReference>
<comment type="function">
    <text evidence="1">Catalyzes the interconversion of L-alanine and D-alanine. May also act on other amino acids.</text>
</comment>
<comment type="catalytic activity">
    <reaction evidence="1">
        <text>L-alanine = D-alanine</text>
        <dbReference type="Rhea" id="RHEA:20249"/>
        <dbReference type="ChEBI" id="CHEBI:57416"/>
        <dbReference type="ChEBI" id="CHEBI:57972"/>
        <dbReference type="EC" id="5.1.1.1"/>
    </reaction>
</comment>
<comment type="cofactor">
    <cofactor evidence="1">
        <name>pyridoxal 5'-phosphate</name>
        <dbReference type="ChEBI" id="CHEBI:597326"/>
    </cofactor>
</comment>
<comment type="pathway">
    <text evidence="1">Amino-acid biosynthesis; D-alanine biosynthesis; D-alanine from L-alanine: step 1/1.</text>
</comment>
<comment type="similarity">
    <text evidence="1">Belongs to the alanine racemase family.</text>
</comment>
<comment type="sequence caution" evidence="2">
    <conflict type="erroneous initiation">
        <sequence resource="EMBL-CDS" id="AAL00344"/>
    </conflict>
</comment>
<accession>P0A2W9</accession>
<accession>Q54899</accession>
<accession>Q9S3V7</accession>
<evidence type="ECO:0000255" key="1">
    <source>
        <dbReference type="HAMAP-Rule" id="MF_01201"/>
    </source>
</evidence>
<evidence type="ECO:0000305" key="2"/>
<protein>
    <recommendedName>
        <fullName evidence="1">Alanine racemase</fullName>
        <ecNumber evidence="1">5.1.1.1</ecNumber>
    </recommendedName>
</protein>
<proteinExistence type="inferred from homology"/>
<feature type="chain" id="PRO_0000114582" description="Alanine racemase">
    <location>
        <begin position="1"/>
        <end position="367"/>
    </location>
</feature>
<feature type="active site" description="Proton acceptor; specific for D-alanine" evidence="1">
    <location>
        <position position="40"/>
    </location>
</feature>
<feature type="active site" description="Proton acceptor; specific for L-alanine" evidence="1">
    <location>
        <position position="263"/>
    </location>
</feature>
<feature type="binding site" evidence="1">
    <location>
        <position position="136"/>
    </location>
    <ligand>
        <name>substrate</name>
    </ligand>
</feature>
<feature type="binding site" evidence="1">
    <location>
        <position position="310"/>
    </location>
    <ligand>
        <name>substrate</name>
    </ligand>
</feature>
<feature type="modified residue" description="N6-(pyridoxal phosphate)lysine" evidence="1">
    <location>
        <position position="40"/>
    </location>
</feature>
<organism>
    <name type="scientific">Streptococcus pneumoniae (strain ATCC BAA-255 / R6)</name>
    <dbReference type="NCBI Taxonomy" id="171101"/>
    <lineage>
        <taxon>Bacteria</taxon>
        <taxon>Bacillati</taxon>
        <taxon>Bacillota</taxon>
        <taxon>Bacilli</taxon>
        <taxon>Lactobacillales</taxon>
        <taxon>Streptococcaceae</taxon>
        <taxon>Streptococcus</taxon>
    </lineage>
</organism>
<name>ALR_STRR6</name>
<sequence>MKASPHRPTKALIHLGAIRQNIQQMGAHIPQGTLKLAVVKANAYGHGAVAVAKAIQDDVDGFCVSNIDEAIELRQAGLSKPILILGVSEIEAVALAKEYDFTLTVAGLEWIQALLDKEVDLTGLTVHLKIDSGMGRIGFREASEVEQAQDLLQQHGVCVEGIFTHFATADEESDDYFNAQLERFKTILASMKEVPELVHASNSATTLWHVETIFNAVRMGDAMYGLNPSGAVLDLPYDLIPALTLESALVHVKTVPAGACMGYGATYQADSEQVIATVPIGYADGWTRDMQNFSVLVDGQACPIVGRVSMDQITIRLPKLYPLGTKVTLIGSNGDKEITATQVATYRVTINYEVVCLLSDRIPREYY</sequence>
<reference key="1">
    <citation type="journal article" date="2001" name="J. Bacteriol.">
        <title>Genome of the bacterium Streptococcus pneumoniae strain R6.</title>
        <authorList>
            <person name="Hoskins J."/>
            <person name="Alborn W.E. Jr."/>
            <person name="Arnold J."/>
            <person name="Blaszczak L.C."/>
            <person name="Burgett S."/>
            <person name="DeHoff B.S."/>
            <person name="Estrem S.T."/>
            <person name="Fritz L."/>
            <person name="Fu D.-J."/>
            <person name="Fuller W."/>
            <person name="Geringer C."/>
            <person name="Gilmour R."/>
            <person name="Glass J.S."/>
            <person name="Khoja H."/>
            <person name="Kraft A.R."/>
            <person name="Lagace R.E."/>
            <person name="LeBlanc D.J."/>
            <person name="Lee L.N."/>
            <person name="Lefkowitz E.J."/>
            <person name="Lu J."/>
            <person name="Matsushima P."/>
            <person name="McAhren S.M."/>
            <person name="McHenney M."/>
            <person name="McLeaster K."/>
            <person name="Mundy C.W."/>
            <person name="Nicas T.I."/>
            <person name="Norris F.H."/>
            <person name="O'Gara M."/>
            <person name="Peery R.B."/>
            <person name="Robertson G.T."/>
            <person name="Rockey P."/>
            <person name="Sun P.-M."/>
            <person name="Winkler M.E."/>
            <person name="Yang Y."/>
            <person name="Young-Bellido M."/>
            <person name="Zhao G."/>
            <person name="Zook C.A."/>
            <person name="Baltz R.H."/>
            <person name="Jaskunas S.R."/>
            <person name="Rosteck P.R. Jr."/>
            <person name="Skatrud P.L."/>
            <person name="Glass J.I."/>
        </authorList>
    </citation>
    <scope>NUCLEOTIDE SEQUENCE [LARGE SCALE GENOMIC DNA]</scope>
    <source>
        <strain>ATCC BAA-255 / R6</strain>
    </source>
</reference>